<proteinExistence type="inferred from homology"/>
<comment type="similarity">
    <text evidence="1">Belongs to the herpesviridae UL49 family.</text>
</comment>
<evidence type="ECO:0000305" key="1"/>
<organismHost>
    <name type="scientific">Homo sapiens</name>
    <name type="common">Human</name>
    <dbReference type="NCBI Taxonomy" id="9606"/>
</organismHost>
<organism>
    <name type="scientific">Human herpesvirus 7 (strain JI)</name>
    <name type="common">HHV-7</name>
    <name type="synonym">Human T lymphotropic virus</name>
    <dbReference type="NCBI Taxonomy" id="57278"/>
    <lineage>
        <taxon>Viruses</taxon>
        <taxon>Duplodnaviria</taxon>
        <taxon>Heunggongvirae</taxon>
        <taxon>Peploviricota</taxon>
        <taxon>Herviviricetes</taxon>
        <taxon>Herpesvirales</taxon>
        <taxon>Orthoherpesviridae</taxon>
        <taxon>Betaherpesvirinae</taxon>
        <taxon>Roseolovirus</taxon>
        <taxon>Roseolovirus humanbeta7</taxon>
        <taxon>Human betaherpesvirus 7</taxon>
    </lineage>
</organism>
<dbReference type="EMBL" id="U43400">
    <property type="protein sequence ID" value="AAC54695.1"/>
    <property type="molecule type" value="Genomic_DNA"/>
</dbReference>
<dbReference type="PIR" id="T41935">
    <property type="entry name" value="T41935"/>
</dbReference>
<dbReference type="RefSeq" id="YP_073773.1">
    <property type="nucleotide sequence ID" value="NC_001716.2"/>
</dbReference>
<dbReference type="DNASU" id="3289491"/>
<dbReference type="GeneID" id="3289491"/>
<dbReference type="KEGG" id="vg:3289491"/>
<dbReference type="Proteomes" id="UP000009246">
    <property type="component" value="Segment"/>
</dbReference>
<dbReference type="GO" id="GO:0019033">
    <property type="term" value="C:viral tegument"/>
    <property type="evidence" value="ECO:0007669"/>
    <property type="project" value="InterPro"/>
</dbReference>
<dbReference type="GO" id="GO:0016032">
    <property type="term" value="P:viral process"/>
    <property type="evidence" value="ECO:0007669"/>
    <property type="project" value="InterPro"/>
</dbReference>
<dbReference type="InterPro" id="IPR004339">
    <property type="entry name" value="UL49"/>
</dbReference>
<dbReference type="Pfam" id="PF03117">
    <property type="entry name" value="Herpes_UL49_1"/>
    <property type="match status" value="1"/>
</dbReference>
<reference key="1">
    <citation type="journal article" date="1996" name="J. Virol.">
        <title>Determination and analysis of the complete nucleotide sequence of human herpesvirus.</title>
        <authorList>
            <person name="Nicholas J."/>
        </authorList>
    </citation>
    <scope>NUCLEOTIDE SEQUENCE [LARGE SCALE GENOMIC DNA]</scope>
</reference>
<name>UL49_HHV7J</name>
<accession>P52442</accession>
<sequence>MSSLRNLLCRLISPLCKHGSYSHLQLFLIGDVSKSENCVLSMFVTNKKFLSKDLTDNFYRKFLKVWLKCDLDSRNQIKAIFNKMMMTKNFFLLLAYLYFLYRQCKVLKILALYKIQRLTWKQIVERFKQYPIHKLNQLLEIPSFVSFNDLYYYLFQQQLMLPISTHCNIPCMKLFCLRNFEQCNDITLRYAHRASNLTYQDIFHGCSLTVPCGNFIFAMAMAMIENYCYSFDRFLIPLENNNLVPIVLNKQEKHQLPKILTFALTTVLKRSLTSSIISLPVLCFCKTKCLRYAKIDSYLTVICSKCGHCLNSGKERLKGKQTFSLSSMFYYRDRQEKNIIYSMHTDLLYCSLCGGQRLTLEKVYELYEYSVSGIQVKSVSWKAIIGTNSACTILNDSVKFDAIVACSCRTCYSMIHLQNLTINKLLKLISHSTEFQCQDCQNIYRETCLDLEDCGEICTGCKISQLAKCTQHGCDTW</sequence>
<protein>
    <recommendedName>
        <fullName>Protein U33</fullName>
    </recommendedName>
</protein>
<gene>
    <name type="primary">U33</name>
</gene>
<feature type="chain" id="PRO_0000116205" description="Protein U33">
    <location>
        <begin position="1"/>
        <end position="477"/>
    </location>
</feature>
<keyword id="KW-1185">Reference proteome</keyword>